<organism>
    <name type="scientific">Geotalea uraniireducens (strain Rf4)</name>
    <name type="common">Geobacter uraniireducens</name>
    <dbReference type="NCBI Taxonomy" id="351605"/>
    <lineage>
        <taxon>Bacteria</taxon>
        <taxon>Pseudomonadati</taxon>
        <taxon>Thermodesulfobacteriota</taxon>
        <taxon>Desulfuromonadia</taxon>
        <taxon>Geobacterales</taxon>
        <taxon>Geobacteraceae</taxon>
        <taxon>Geotalea</taxon>
    </lineage>
</organism>
<comment type="function">
    <text evidence="1">Produces ATP from ADP in the presence of a proton gradient across the membrane. The gamma chain is believed to be important in regulating ATPase activity and the flow of protons through the CF(0) complex.</text>
</comment>
<comment type="subunit">
    <text evidence="1">F-type ATPases have 2 components, CF(1) - the catalytic core - and CF(0) - the membrane proton channel. CF(1) has five subunits: alpha(3), beta(3), gamma(1), delta(1), epsilon(1). CF(0) has three main subunits: a, b and c.</text>
</comment>
<comment type="subcellular location">
    <subcellularLocation>
        <location evidence="1">Cell inner membrane</location>
        <topology evidence="1">Peripheral membrane protein</topology>
    </subcellularLocation>
</comment>
<comment type="similarity">
    <text evidence="1">Belongs to the ATPase gamma chain family.</text>
</comment>
<reference key="1">
    <citation type="submission" date="2007-05" db="EMBL/GenBank/DDBJ databases">
        <title>Complete sequence of Geobacter uraniireducens Rf4.</title>
        <authorList>
            <consortium name="US DOE Joint Genome Institute"/>
            <person name="Copeland A."/>
            <person name="Lucas S."/>
            <person name="Lapidus A."/>
            <person name="Barry K."/>
            <person name="Detter J.C."/>
            <person name="Glavina del Rio T."/>
            <person name="Hammon N."/>
            <person name="Israni S."/>
            <person name="Dalin E."/>
            <person name="Tice H."/>
            <person name="Pitluck S."/>
            <person name="Chertkov O."/>
            <person name="Brettin T."/>
            <person name="Bruce D."/>
            <person name="Han C."/>
            <person name="Schmutz J."/>
            <person name="Larimer F."/>
            <person name="Land M."/>
            <person name="Hauser L."/>
            <person name="Kyrpides N."/>
            <person name="Mikhailova N."/>
            <person name="Shelobolina E."/>
            <person name="Aklujkar M."/>
            <person name="Lovley D."/>
            <person name="Richardson P."/>
        </authorList>
    </citation>
    <scope>NUCLEOTIDE SEQUENCE [LARGE SCALE GENOMIC DNA]</scope>
    <source>
        <strain>ATCC BAA-1134 / JCM 13001 / Rf4</strain>
    </source>
</reference>
<gene>
    <name evidence="1" type="primary">atpG</name>
    <name type="ordered locus">Gura_4262</name>
</gene>
<name>ATPG_GEOUR</name>
<protein>
    <recommendedName>
        <fullName evidence="1">ATP synthase gamma chain</fullName>
    </recommendedName>
    <alternativeName>
        <fullName evidence="1">ATP synthase F1 sector gamma subunit</fullName>
    </alternativeName>
    <alternativeName>
        <fullName evidence="1">F-ATPase gamma subunit</fullName>
    </alternativeName>
</protein>
<accession>A5G9D7</accession>
<proteinExistence type="inferred from homology"/>
<evidence type="ECO:0000255" key="1">
    <source>
        <dbReference type="HAMAP-Rule" id="MF_00815"/>
    </source>
</evidence>
<keyword id="KW-0066">ATP synthesis</keyword>
<keyword id="KW-0997">Cell inner membrane</keyword>
<keyword id="KW-1003">Cell membrane</keyword>
<keyword id="KW-0139">CF(1)</keyword>
<keyword id="KW-0375">Hydrogen ion transport</keyword>
<keyword id="KW-0406">Ion transport</keyword>
<keyword id="KW-0472">Membrane</keyword>
<keyword id="KW-1185">Reference proteome</keyword>
<keyword id="KW-0813">Transport</keyword>
<sequence length="287" mass="32040">MASLKSIKKRIVSVKNTRQITKAMKMVSAAKLRRAQENVVAARPYAKKLGEVLERLSKSQDVDGSPLMEKRQGGKALLIIVSSDRGLCGGFNANICKAAERFAKERGSEFTELSMMTIGRKGYEFLKNRHKIYKNYANIFGTLNYQTAALIARELIDGYLAEEYDEVYLLFNAFKSVMTQDITLEQLLPVTPEVAAEEEYAPEYIYEPSKAALLDELLPKHIEVQMFKAMLESVASEHGARMTAMDSASKNASEMIGKLTLQYNRARQAAITTELMEIISGSESIKG</sequence>
<feature type="chain" id="PRO_1000083789" description="ATP synthase gamma chain">
    <location>
        <begin position="1"/>
        <end position="287"/>
    </location>
</feature>
<dbReference type="EMBL" id="CP000698">
    <property type="protein sequence ID" value="ABQ28405.1"/>
    <property type="molecule type" value="Genomic_DNA"/>
</dbReference>
<dbReference type="RefSeq" id="WP_011941035.1">
    <property type="nucleotide sequence ID" value="NC_009483.1"/>
</dbReference>
<dbReference type="SMR" id="A5G9D7"/>
<dbReference type="STRING" id="351605.Gura_4262"/>
<dbReference type="KEGG" id="gur:Gura_4262"/>
<dbReference type="HOGENOM" id="CLU_050669_0_1_7"/>
<dbReference type="OrthoDB" id="9812769at2"/>
<dbReference type="Proteomes" id="UP000006695">
    <property type="component" value="Chromosome"/>
</dbReference>
<dbReference type="GO" id="GO:0005886">
    <property type="term" value="C:plasma membrane"/>
    <property type="evidence" value="ECO:0007669"/>
    <property type="project" value="UniProtKB-SubCell"/>
</dbReference>
<dbReference type="GO" id="GO:0045259">
    <property type="term" value="C:proton-transporting ATP synthase complex"/>
    <property type="evidence" value="ECO:0007669"/>
    <property type="project" value="UniProtKB-KW"/>
</dbReference>
<dbReference type="GO" id="GO:0005524">
    <property type="term" value="F:ATP binding"/>
    <property type="evidence" value="ECO:0007669"/>
    <property type="project" value="UniProtKB-UniRule"/>
</dbReference>
<dbReference type="GO" id="GO:0046933">
    <property type="term" value="F:proton-transporting ATP synthase activity, rotational mechanism"/>
    <property type="evidence" value="ECO:0007669"/>
    <property type="project" value="UniProtKB-UniRule"/>
</dbReference>
<dbReference type="GO" id="GO:0042777">
    <property type="term" value="P:proton motive force-driven plasma membrane ATP synthesis"/>
    <property type="evidence" value="ECO:0007669"/>
    <property type="project" value="UniProtKB-UniRule"/>
</dbReference>
<dbReference type="CDD" id="cd12151">
    <property type="entry name" value="F1-ATPase_gamma"/>
    <property type="match status" value="1"/>
</dbReference>
<dbReference type="FunFam" id="1.10.287.80:FF:000001">
    <property type="entry name" value="ATP synthase gamma chain"/>
    <property type="match status" value="1"/>
</dbReference>
<dbReference type="FunFam" id="1.10.287.80:FF:000003">
    <property type="entry name" value="ATP synthase gamma chain, chloroplastic"/>
    <property type="match status" value="1"/>
</dbReference>
<dbReference type="Gene3D" id="3.40.1380.10">
    <property type="match status" value="1"/>
</dbReference>
<dbReference type="Gene3D" id="1.10.287.80">
    <property type="entry name" value="ATP synthase, gamma subunit, helix hairpin domain"/>
    <property type="match status" value="2"/>
</dbReference>
<dbReference type="HAMAP" id="MF_00815">
    <property type="entry name" value="ATP_synth_gamma_bact"/>
    <property type="match status" value="1"/>
</dbReference>
<dbReference type="InterPro" id="IPR035968">
    <property type="entry name" value="ATP_synth_F1_ATPase_gsu"/>
</dbReference>
<dbReference type="InterPro" id="IPR000131">
    <property type="entry name" value="ATP_synth_F1_gsu"/>
</dbReference>
<dbReference type="NCBIfam" id="TIGR01146">
    <property type="entry name" value="ATPsyn_F1gamma"/>
    <property type="match status" value="1"/>
</dbReference>
<dbReference type="PANTHER" id="PTHR11693">
    <property type="entry name" value="ATP SYNTHASE GAMMA CHAIN"/>
    <property type="match status" value="1"/>
</dbReference>
<dbReference type="PANTHER" id="PTHR11693:SF22">
    <property type="entry name" value="ATP SYNTHASE SUBUNIT GAMMA, MITOCHONDRIAL"/>
    <property type="match status" value="1"/>
</dbReference>
<dbReference type="Pfam" id="PF00231">
    <property type="entry name" value="ATP-synt"/>
    <property type="match status" value="1"/>
</dbReference>
<dbReference type="PIRSF" id="PIRSF039089">
    <property type="entry name" value="ATP_synthase_gamma"/>
    <property type="match status" value="1"/>
</dbReference>
<dbReference type="PRINTS" id="PR00126">
    <property type="entry name" value="ATPASEGAMMA"/>
</dbReference>
<dbReference type="SUPFAM" id="SSF52943">
    <property type="entry name" value="ATP synthase (F1-ATPase), gamma subunit"/>
    <property type="match status" value="1"/>
</dbReference>